<reference key="1">
    <citation type="submission" date="2009-01" db="EMBL/GenBank/DDBJ databases">
        <title>Complete sequence of chromosome of Caldicellulosiruptor becscii DSM 6725.</title>
        <authorList>
            <person name="Lucas S."/>
            <person name="Copeland A."/>
            <person name="Lapidus A."/>
            <person name="Glavina del Rio T."/>
            <person name="Tice H."/>
            <person name="Bruce D."/>
            <person name="Goodwin L."/>
            <person name="Pitluck S."/>
            <person name="Sims D."/>
            <person name="Meincke L."/>
            <person name="Brettin T."/>
            <person name="Detter J.C."/>
            <person name="Han C."/>
            <person name="Larimer F."/>
            <person name="Land M."/>
            <person name="Hauser L."/>
            <person name="Kyrpides N."/>
            <person name="Ovchinnikova G."/>
            <person name="Kataeva I."/>
            <person name="Adams M.W.W."/>
        </authorList>
    </citation>
    <scope>NUCLEOTIDE SEQUENCE [LARGE SCALE GENOMIC DNA]</scope>
    <source>
        <strain>ATCC BAA-1888 / DSM 6725 / KCTC 15123 / Z-1320</strain>
    </source>
</reference>
<proteinExistence type="inferred from homology"/>
<feature type="chain" id="PRO_1000123613" description="Translational regulator CsrA">
    <location>
        <begin position="1"/>
        <end position="78"/>
    </location>
</feature>
<accession>B9MKA5</accession>
<comment type="function">
    <text evidence="1">A translational regulator that binds mRNA to regulate translation initiation and/or mRNA stability. Usually binds in the 5'-UTR at or near the Shine-Dalgarno sequence preventing ribosome-binding, thus repressing translation. Its main target seems to be the major flagellin gene, while its function is anatagonized by FliW.</text>
</comment>
<comment type="subunit">
    <text evidence="1">Homodimer; the beta-strands of each monomer intercalate to form a hydrophobic core, while the alpha-helices form wings that extend away from the core.</text>
</comment>
<comment type="subcellular location">
    <subcellularLocation>
        <location evidence="1">Cytoplasm</location>
    </subcellularLocation>
</comment>
<comment type="similarity">
    <text evidence="1">Belongs to the CsrA/RsmA family.</text>
</comment>
<gene>
    <name evidence="1" type="primary">csrA</name>
    <name type="ordered locus">Athe_1669</name>
</gene>
<organism>
    <name type="scientific">Caldicellulosiruptor bescii (strain ATCC BAA-1888 / DSM 6725 / KCTC 15123 / Z-1320)</name>
    <name type="common">Anaerocellum thermophilum</name>
    <dbReference type="NCBI Taxonomy" id="521460"/>
    <lineage>
        <taxon>Bacteria</taxon>
        <taxon>Bacillati</taxon>
        <taxon>Bacillota</taxon>
        <taxon>Bacillota incertae sedis</taxon>
        <taxon>Caldicellulosiruptorales</taxon>
        <taxon>Caldicellulosiruptoraceae</taxon>
        <taxon>Caldicellulosiruptor</taxon>
    </lineage>
</organism>
<sequence length="78" mass="8874">MLVLSRKEGDQILIGDDIIIKVISIEKDCVKLGIDAPKNIKVLRYELLQEVKNENVEALQGKERLIRIKDLKGLFKDG</sequence>
<keyword id="KW-1005">Bacterial flagellum biogenesis</keyword>
<keyword id="KW-0963">Cytoplasm</keyword>
<keyword id="KW-0678">Repressor</keyword>
<keyword id="KW-0694">RNA-binding</keyword>
<keyword id="KW-0810">Translation regulation</keyword>
<dbReference type="EMBL" id="CP001393">
    <property type="protein sequence ID" value="ACM60763.1"/>
    <property type="molecule type" value="Genomic_DNA"/>
</dbReference>
<dbReference type="RefSeq" id="WP_015908096.1">
    <property type="nucleotide sequence ID" value="NC_012034.1"/>
</dbReference>
<dbReference type="SMR" id="B9MKA5"/>
<dbReference type="STRING" id="521460.Athe_1669"/>
<dbReference type="GeneID" id="31773017"/>
<dbReference type="KEGG" id="ate:Athe_1669"/>
<dbReference type="eggNOG" id="COG1551">
    <property type="taxonomic scope" value="Bacteria"/>
</dbReference>
<dbReference type="HOGENOM" id="CLU_164837_0_0_9"/>
<dbReference type="Proteomes" id="UP000007723">
    <property type="component" value="Chromosome"/>
</dbReference>
<dbReference type="GO" id="GO:0005829">
    <property type="term" value="C:cytosol"/>
    <property type="evidence" value="ECO:0007669"/>
    <property type="project" value="TreeGrafter"/>
</dbReference>
<dbReference type="GO" id="GO:0048027">
    <property type="term" value="F:mRNA 5'-UTR binding"/>
    <property type="evidence" value="ECO:0007669"/>
    <property type="project" value="UniProtKB-UniRule"/>
</dbReference>
<dbReference type="GO" id="GO:0044781">
    <property type="term" value="P:bacterial-type flagellum organization"/>
    <property type="evidence" value="ECO:0007669"/>
    <property type="project" value="UniProtKB-KW"/>
</dbReference>
<dbReference type="GO" id="GO:0006402">
    <property type="term" value="P:mRNA catabolic process"/>
    <property type="evidence" value="ECO:0007669"/>
    <property type="project" value="InterPro"/>
</dbReference>
<dbReference type="GO" id="GO:0045947">
    <property type="term" value="P:negative regulation of translational initiation"/>
    <property type="evidence" value="ECO:0007669"/>
    <property type="project" value="UniProtKB-UniRule"/>
</dbReference>
<dbReference type="GO" id="GO:1902208">
    <property type="term" value="P:regulation of bacterial-type flagellum assembly"/>
    <property type="evidence" value="ECO:0007669"/>
    <property type="project" value="UniProtKB-UniRule"/>
</dbReference>
<dbReference type="GO" id="GO:0006109">
    <property type="term" value="P:regulation of carbohydrate metabolic process"/>
    <property type="evidence" value="ECO:0007669"/>
    <property type="project" value="InterPro"/>
</dbReference>
<dbReference type="FunFam" id="2.60.40.4380:FF:000002">
    <property type="entry name" value="Translational regulator CsrA"/>
    <property type="match status" value="1"/>
</dbReference>
<dbReference type="Gene3D" id="2.60.40.4380">
    <property type="entry name" value="Translational regulator CsrA"/>
    <property type="match status" value="1"/>
</dbReference>
<dbReference type="HAMAP" id="MF_00167">
    <property type="entry name" value="CsrA"/>
    <property type="match status" value="1"/>
</dbReference>
<dbReference type="InterPro" id="IPR003751">
    <property type="entry name" value="CsrA"/>
</dbReference>
<dbReference type="InterPro" id="IPR036107">
    <property type="entry name" value="CsrA_sf"/>
</dbReference>
<dbReference type="NCBIfam" id="TIGR00202">
    <property type="entry name" value="csrA"/>
    <property type="match status" value="1"/>
</dbReference>
<dbReference type="PANTHER" id="PTHR34984">
    <property type="entry name" value="CARBON STORAGE REGULATOR"/>
    <property type="match status" value="1"/>
</dbReference>
<dbReference type="PANTHER" id="PTHR34984:SF1">
    <property type="entry name" value="CARBON STORAGE REGULATOR"/>
    <property type="match status" value="1"/>
</dbReference>
<dbReference type="Pfam" id="PF02599">
    <property type="entry name" value="CsrA"/>
    <property type="match status" value="1"/>
</dbReference>
<dbReference type="SUPFAM" id="SSF117130">
    <property type="entry name" value="CsrA-like"/>
    <property type="match status" value="1"/>
</dbReference>
<evidence type="ECO:0000255" key="1">
    <source>
        <dbReference type="HAMAP-Rule" id="MF_00167"/>
    </source>
</evidence>
<protein>
    <recommendedName>
        <fullName evidence="1">Translational regulator CsrA</fullName>
    </recommendedName>
</protein>
<name>CSRA_CALBD</name>